<comment type="function">
    <text evidence="1">Involved in the regulation of glutamine synthetase GlnA, a key enzyme in the process to assimilate ammonia. When cellular nitrogen levels are high, the C-terminal adenylyl transferase (AT) inactivates GlnA by covalent transfer of an adenylyl group from ATP to specific tyrosine residue of GlnA, thus reducing its activity. Conversely, when nitrogen levels are low, the N-terminal adenylyl removase (AR) activates GlnA by removing the adenylyl group by phosphorolysis, increasing its activity. The regulatory region of GlnE binds the signal transduction protein PII (GlnB) which indicates the nitrogen status of the cell.</text>
</comment>
<comment type="catalytic activity">
    <reaction evidence="1">
        <text>[glutamine synthetase]-O(4)-(5'-adenylyl)-L-tyrosine + phosphate = [glutamine synthetase]-L-tyrosine + ADP</text>
        <dbReference type="Rhea" id="RHEA:43716"/>
        <dbReference type="Rhea" id="RHEA-COMP:10660"/>
        <dbReference type="Rhea" id="RHEA-COMP:10661"/>
        <dbReference type="ChEBI" id="CHEBI:43474"/>
        <dbReference type="ChEBI" id="CHEBI:46858"/>
        <dbReference type="ChEBI" id="CHEBI:83624"/>
        <dbReference type="ChEBI" id="CHEBI:456216"/>
        <dbReference type="EC" id="2.7.7.89"/>
    </reaction>
</comment>
<comment type="catalytic activity">
    <reaction evidence="1">
        <text>[glutamine synthetase]-L-tyrosine + ATP = [glutamine synthetase]-O(4)-(5'-adenylyl)-L-tyrosine + diphosphate</text>
        <dbReference type="Rhea" id="RHEA:18589"/>
        <dbReference type="Rhea" id="RHEA-COMP:10660"/>
        <dbReference type="Rhea" id="RHEA-COMP:10661"/>
        <dbReference type="ChEBI" id="CHEBI:30616"/>
        <dbReference type="ChEBI" id="CHEBI:33019"/>
        <dbReference type="ChEBI" id="CHEBI:46858"/>
        <dbReference type="ChEBI" id="CHEBI:83624"/>
        <dbReference type="EC" id="2.7.7.42"/>
    </reaction>
</comment>
<comment type="cofactor">
    <cofactor evidence="1">
        <name>Mg(2+)</name>
        <dbReference type="ChEBI" id="CHEBI:18420"/>
    </cofactor>
</comment>
<comment type="similarity">
    <text evidence="1">Belongs to the GlnE family.</text>
</comment>
<organism>
    <name type="scientific">Xanthomonas oryzae pv. oryzae (strain MAFF 311018)</name>
    <dbReference type="NCBI Taxonomy" id="342109"/>
    <lineage>
        <taxon>Bacteria</taxon>
        <taxon>Pseudomonadati</taxon>
        <taxon>Pseudomonadota</taxon>
        <taxon>Gammaproteobacteria</taxon>
        <taxon>Lysobacterales</taxon>
        <taxon>Lysobacteraceae</taxon>
        <taxon>Xanthomonas</taxon>
    </lineage>
</organism>
<keyword id="KW-0067">ATP-binding</keyword>
<keyword id="KW-0460">Magnesium</keyword>
<keyword id="KW-0511">Multifunctional enzyme</keyword>
<keyword id="KW-0547">Nucleotide-binding</keyword>
<keyword id="KW-0548">Nucleotidyltransferase</keyword>
<keyword id="KW-0808">Transferase</keyword>
<name>GLNE_XANOM</name>
<proteinExistence type="inferred from homology"/>
<protein>
    <recommendedName>
        <fullName evidence="1">Bifunctional glutamine synthetase adenylyltransferase/adenylyl-removing enzyme</fullName>
    </recommendedName>
    <alternativeName>
        <fullName evidence="1">ATP:glutamine synthetase adenylyltransferase</fullName>
    </alternativeName>
    <alternativeName>
        <fullName evidence="1">ATase</fullName>
    </alternativeName>
    <domain>
        <recommendedName>
            <fullName evidence="1">Glutamine synthetase adenylyl-L-tyrosine phosphorylase</fullName>
            <ecNumber evidence="1">2.7.7.89</ecNumber>
        </recommendedName>
        <alternativeName>
            <fullName evidence="1">Adenylyl removase</fullName>
            <shortName evidence="1">AR</shortName>
            <shortName evidence="1">AT-N</shortName>
        </alternativeName>
    </domain>
    <domain>
        <recommendedName>
            <fullName evidence="1">Glutamine synthetase adenylyl transferase</fullName>
            <ecNumber evidence="1">2.7.7.42</ecNumber>
        </recommendedName>
        <alternativeName>
            <fullName evidence="1">Adenylyl transferase</fullName>
            <shortName evidence="1">AT</shortName>
            <shortName evidence="1">AT-C</shortName>
        </alternativeName>
    </domain>
</protein>
<evidence type="ECO:0000255" key="1">
    <source>
        <dbReference type="HAMAP-Rule" id="MF_00802"/>
    </source>
</evidence>
<feature type="chain" id="PRO_1000047019" description="Bifunctional glutamine synthetase adenylyltransferase/adenylyl-removing enzyme">
    <location>
        <begin position="1"/>
        <end position="941"/>
    </location>
</feature>
<feature type="region of interest" description="Adenylyl removase" evidence="1">
    <location>
        <begin position="1"/>
        <end position="437"/>
    </location>
</feature>
<feature type="region of interest" description="Adenylyl transferase" evidence="1">
    <location>
        <begin position="444"/>
        <end position="941"/>
    </location>
</feature>
<sequence length="941" mass="102911">MSIPTASLSPALAALIERAVARVRQSLPAWQVWPGGDFDRQLAQVALASDFALDTLARQPALLQHLAHPDPPPLPLPQLDPAQPQLWPAQLRRYRSAESTRLVWRDVLGLDSVEATLAGATRLAEHCMQCGLQALEQQFATRHGKVIADDGSVQRLVVFGLGKLGGGELNFSSDVDLVYAYPQGGQSDGARSLAAEEYFARLGQQLARLLDEATAEGFSHRVDLRLRPFGTAGRVALSFAGMDQYFQREGRDWERYAWLKARAVAGAIDAGEAWLETLRPFVYRRYLDFTALDGLREMKAAITAEVARHDCLDDIKRGPGGIREIEFLAQSLQLIRGGREPSLRERRLLPALRALVTAGQIDQENGQALTTAYRFLRRLENRLQMLRDAQTHALPQAPLDRERIALGLGYAEWATLLDALAPQRARVTAEFAELLAPRVRATAPDTLADYWRALPAGDAARLAGMGLSDPGGAHQALADFAHSSGVRGLSDSARARLDRVMPALLHAATRASQPDAAVPRMLGLLQATLRRTSYLSLLDEQPSALARLVDVLSRSALLAERLAAYPLLLDELLDTRISGPLPDRAALHAACADIVHIDDTEAALRELNERRLARSFRIALATLDGRQQAVESTRQLAWLAEAVVQTVLHLARTEMVAAHGYVSGGSFAIIGYGSLGGMELGFGSDLDLVFLYDHPPEVDASDGKRPLEAGRWFARLAQKVMALLAAETGAGRLYDIDVRLRPDGGKAALVSSLASYREYQRERAWTWEHQALVRARAVAGDAVLCDAFAQVRRYTLMRVRDTAQLHEDVRKMRARMRTELDRSDAGRLDLKQGAGGLVDLEFVLQAGVLGLAAQQPQLLDVCDTPALIDALVQVHWLPDDSAASLHQAHATLVDAGLSCTLDRRPRLIAPTPAIQQARGTIFNAARVQRLTFPLGKDEAAL</sequence>
<reference key="1">
    <citation type="journal article" date="2005" name="Jpn. Agric. Res. Q.">
        <title>Genome sequence of Xanthomonas oryzae pv. oryzae suggests contribution of large numbers of effector genes and insertion sequences to its race diversity.</title>
        <authorList>
            <person name="Ochiai H."/>
            <person name="Inoue Y."/>
            <person name="Takeya M."/>
            <person name="Sasaki A."/>
            <person name="Kaku H."/>
        </authorList>
    </citation>
    <scope>NUCLEOTIDE SEQUENCE [LARGE SCALE GENOMIC DNA]</scope>
    <source>
        <strain>MAFF 311018</strain>
    </source>
</reference>
<accession>Q2NY41</accession>
<gene>
    <name evidence="1" type="primary">glnE</name>
    <name type="ordered locus">XOO4031</name>
</gene>
<dbReference type="EC" id="2.7.7.89" evidence="1"/>
<dbReference type="EC" id="2.7.7.42" evidence="1"/>
<dbReference type="EMBL" id="AP008229">
    <property type="protein sequence ID" value="BAE70786.1"/>
    <property type="molecule type" value="Genomic_DNA"/>
</dbReference>
<dbReference type="RefSeq" id="WP_011409641.1">
    <property type="nucleotide sequence ID" value="NC_007705.1"/>
</dbReference>
<dbReference type="SMR" id="Q2NY41"/>
<dbReference type="KEGG" id="xom:XOO4031"/>
<dbReference type="HOGENOM" id="CLU_006233_0_1_6"/>
<dbReference type="GO" id="GO:0005829">
    <property type="term" value="C:cytosol"/>
    <property type="evidence" value="ECO:0007669"/>
    <property type="project" value="TreeGrafter"/>
</dbReference>
<dbReference type="GO" id="GO:0008882">
    <property type="term" value="F:[glutamate-ammonia-ligase] adenylyltransferase activity"/>
    <property type="evidence" value="ECO:0007669"/>
    <property type="project" value="UniProtKB-UniRule"/>
</dbReference>
<dbReference type="GO" id="GO:0047388">
    <property type="term" value="F:[glutamine synthetase]-adenylyl-L-tyrosine phosphorylase activity"/>
    <property type="evidence" value="ECO:0007669"/>
    <property type="project" value="UniProtKB-EC"/>
</dbReference>
<dbReference type="GO" id="GO:0005524">
    <property type="term" value="F:ATP binding"/>
    <property type="evidence" value="ECO:0007669"/>
    <property type="project" value="UniProtKB-UniRule"/>
</dbReference>
<dbReference type="GO" id="GO:0000287">
    <property type="term" value="F:magnesium ion binding"/>
    <property type="evidence" value="ECO:0007669"/>
    <property type="project" value="UniProtKB-UniRule"/>
</dbReference>
<dbReference type="GO" id="GO:0000820">
    <property type="term" value="P:regulation of glutamine family amino acid metabolic process"/>
    <property type="evidence" value="ECO:0007669"/>
    <property type="project" value="UniProtKB-UniRule"/>
</dbReference>
<dbReference type="CDD" id="cd05401">
    <property type="entry name" value="NT_GlnE_GlnD_like"/>
    <property type="match status" value="2"/>
</dbReference>
<dbReference type="FunFam" id="1.20.120.330:FF:000005">
    <property type="entry name" value="Bifunctional glutamine synthetase adenylyltransferase/adenylyl-removing enzyme"/>
    <property type="match status" value="1"/>
</dbReference>
<dbReference type="FunFam" id="3.30.460.10:FF:000009">
    <property type="entry name" value="Bifunctional glutamine synthetase adenylyltransferase/adenylyl-removing enzyme"/>
    <property type="match status" value="1"/>
</dbReference>
<dbReference type="Gene3D" id="1.20.120.1510">
    <property type="match status" value="1"/>
</dbReference>
<dbReference type="Gene3D" id="3.30.460.10">
    <property type="entry name" value="Beta Polymerase, domain 2"/>
    <property type="match status" value="2"/>
</dbReference>
<dbReference type="Gene3D" id="1.20.120.330">
    <property type="entry name" value="Nucleotidyltransferases domain 2"/>
    <property type="match status" value="2"/>
</dbReference>
<dbReference type="HAMAP" id="MF_00802">
    <property type="entry name" value="GlnE"/>
    <property type="match status" value="1"/>
</dbReference>
<dbReference type="InterPro" id="IPR023057">
    <property type="entry name" value="GlnE"/>
</dbReference>
<dbReference type="InterPro" id="IPR005190">
    <property type="entry name" value="GlnE_rpt_dom"/>
</dbReference>
<dbReference type="InterPro" id="IPR043519">
    <property type="entry name" value="NT_sf"/>
</dbReference>
<dbReference type="InterPro" id="IPR013546">
    <property type="entry name" value="PII_UdlTrfase/GS_AdlTrfase"/>
</dbReference>
<dbReference type="NCBIfam" id="NF008292">
    <property type="entry name" value="PRK11072.1"/>
    <property type="match status" value="1"/>
</dbReference>
<dbReference type="PANTHER" id="PTHR30621:SF0">
    <property type="entry name" value="BIFUNCTIONAL GLUTAMINE SYNTHETASE ADENYLYLTRANSFERASE_ADENYLYL-REMOVING ENZYME"/>
    <property type="match status" value="1"/>
</dbReference>
<dbReference type="PANTHER" id="PTHR30621">
    <property type="entry name" value="GLUTAMINE SYNTHETASE ADENYLYLTRANSFERASE"/>
    <property type="match status" value="1"/>
</dbReference>
<dbReference type="Pfam" id="PF08335">
    <property type="entry name" value="GlnD_UR_UTase"/>
    <property type="match status" value="2"/>
</dbReference>
<dbReference type="Pfam" id="PF03710">
    <property type="entry name" value="GlnE"/>
    <property type="match status" value="2"/>
</dbReference>
<dbReference type="SUPFAM" id="SSF81301">
    <property type="entry name" value="Nucleotidyltransferase"/>
    <property type="match status" value="2"/>
</dbReference>
<dbReference type="SUPFAM" id="SSF81593">
    <property type="entry name" value="Nucleotidyltransferase substrate binding subunit/domain"/>
    <property type="match status" value="2"/>
</dbReference>